<reference key="1">
    <citation type="journal article" date="2003" name="Genome Res.">
        <title>Comparative genome analysis of Vibrio vulnificus, a marine pathogen.</title>
        <authorList>
            <person name="Chen C.-Y."/>
            <person name="Wu K.-M."/>
            <person name="Chang Y.-C."/>
            <person name="Chang C.-H."/>
            <person name="Tsai H.-C."/>
            <person name="Liao T.-L."/>
            <person name="Liu Y.-M."/>
            <person name="Chen H.-J."/>
            <person name="Shen A.B.-T."/>
            <person name="Li J.-C."/>
            <person name="Su T.-L."/>
            <person name="Shao C.-P."/>
            <person name="Lee C.-T."/>
            <person name="Hor L.-I."/>
            <person name="Tsai S.-F."/>
        </authorList>
    </citation>
    <scope>NUCLEOTIDE SEQUENCE [LARGE SCALE GENOMIC DNA]</scope>
    <source>
        <strain>YJ016</strain>
    </source>
</reference>
<gene>
    <name evidence="1" type="primary">rplN</name>
    <name type="ordered locus">VV0385</name>
</gene>
<feature type="chain" id="PRO_0000266582" description="Large ribosomal subunit protein uL14">
    <location>
        <begin position="1"/>
        <end position="123"/>
    </location>
</feature>
<proteinExistence type="inferred from homology"/>
<comment type="function">
    <text evidence="1">Binds to 23S rRNA. Forms part of two intersubunit bridges in the 70S ribosome.</text>
</comment>
<comment type="subunit">
    <text evidence="1">Part of the 50S ribosomal subunit. Forms a cluster with proteins L3 and L19. In the 70S ribosome, L14 and L19 interact and together make contacts with the 16S rRNA in bridges B5 and B8.</text>
</comment>
<comment type="similarity">
    <text evidence="1">Belongs to the universal ribosomal protein uL14 family.</text>
</comment>
<keyword id="KW-0687">Ribonucleoprotein</keyword>
<keyword id="KW-0689">Ribosomal protein</keyword>
<keyword id="KW-0694">RNA-binding</keyword>
<keyword id="KW-0699">rRNA-binding</keyword>
<organism>
    <name type="scientific">Vibrio vulnificus (strain YJ016)</name>
    <dbReference type="NCBI Taxonomy" id="196600"/>
    <lineage>
        <taxon>Bacteria</taxon>
        <taxon>Pseudomonadati</taxon>
        <taxon>Pseudomonadota</taxon>
        <taxon>Gammaproteobacteria</taxon>
        <taxon>Vibrionales</taxon>
        <taxon>Vibrionaceae</taxon>
        <taxon>Vibrio</taxon>
    </lineage>
</organism>
<sequence>MIQMQSMLDAADNSGARSVMCIKVLGGSHRRYAHIGDVIKVTVKEAIPRGKVKKGDVLKAVVVRTRKGVRRPDGSVIRFDRNACVLLNNNTEQPIGTRIFGPVTRELRGDKFMKIVSLAPEVL</sequence>
<accession>Q7MPH8</accession>
<protein>
    <recommendedName>
        <fullName evidence="1">Large ribosomal subunit protein uL14</fullName>
    </recommendedName>
    <alternativeName>
        <fullName evidence="2">50S ribosomal protein L14</fullName>
    </alternativeName>
</protein>
<evidence type="ECO:0000255" key="1">
    <source>
        <dbReference type="HAMAP-Rule" id="MF_01367"/>
    </source>
</evidence>
<evidence type="ECO:0000305" key="2"/>
<dbReference type="EMBL" id="BA000037">
    <property type="protein sequence ID" value="BAC93149.1"/>
    <property type="molecule type" value="Genomic_DNA"/>
</dbReference>
<dbReference type="RefSeq" id="WP_011078823.1">
    <property type="nucleotide sequence ID" value="NC_005139.1"/>
</dbReference>
<dbReference type="SMR" id="Q7MPH8"/>
<dbReference type="STRING" id="672.VV93_v1c03560"/>
<dbReference type="KEGG" id="vvy:VV0385"/>
<dbReference type="eggNOG" id="COG0093">
    <property type="taxonomic scope" value="Bacteria"/>
</dbReference>
<dbReference type="HOGENOM" id="CLU_095071_2_1_6"/>
<dbReference type="Proteomes" id="UP000002675">
    <property type="component" value="Chromosome I"/>
</dbReference>
<dbReference type="GO" id="GO:0022625">
    <property type="term" value="C:cytosolic large ribosomal subunit"/>
    <property type="evidence" value="ECO:0007669"/>
    <property type="project" value="TreeGrafter"/>
</dbReference>
<dbReference type="GO" id="GO:0070180">
    <property type="term" value="F:large ribosomal subunit rRNA binding"/>
    <property type="evidence" value="ECO:0007669"/>
    <property type="project" value="TreeGrafter"/>
</dbReference>
<dbReference type="GO" id="GO:0003735">
    <property type="term" value="F:structural constituent of ribosome"/>
    <property type="evidence" value="ECO:0007669"/>
    <property type="project" value="InterPro"/>
</dbReference>
<dbReference type="GO" id="GO:0006412">
    <property type="term" value="P:translation"/>
    <property type="evidence" value="ECO:0007669"/>
    <property type="project" value="UniProtKB-UniRule"/>
</dbReference>
<dbReference type="CDD" id="cd00337">
    <property type="entry name" value="Ribosomal_uL14"/>
    <property type="match status" value="1"/>
</dbReference>
<dbReference type="FunFam" id="2.40.150.20:FF:000001">
    <property type="entry name" value="50S ribosomal protein L14"/>
    <property type="match status" value="1"/>
</dbReference>
<dbReference type="Gene3D" id="2.40.150.20">
    <property type="entry name" value="Ribosomal protein L14"/>
    <property type="match status" value="1"/>
</dbReference>
<dbReference type="HAMAP" id="MF_01367">
    <property type="entry name" value="Ribosomal_uL14"/>
    <property type="match status" value="1"/>
</dbReference>
<dbReference type="InterPro" id="IPR000218">
    <property type="entry name" value="Ribosomal_uL14"/>
</dbReference>
<dbReference type="InterPro" id="IPR005745">
    <property type="entry name" value="Ribosomal_uL14_bac-type"/>
</dbReference>
<dbReference type="InterPro" id="IPR019972">
    <property type="entry name" value="Ribosomal_uL14_CS"/>
</dbReference>
<dbReference type="InterPro" id="IPR036853">
    <property type="entry name" value="Ribosomal_uL14_sf"/>
</dbReference>
<dbReference type="NCBIfam" id="TIGR01067">
    <property type="entry name" value="rplN_bact"/>
    <property type="match status" value="1"/>
</dbReference>
<dbReference type="PANTHER" id="PTHR11761">
    <property type="entry name" value="50S/60S RIBOSOMAL PROTEIN L14/L23"/>
    <property type="match status" value="1"/>
</dbReference>
<dbReference type="PANTHER" id="PTHR11761:SF3">
    <property type="entry name" value="LARGE RIBOSOMAL SUBUNIT PROTEIN UL14M"/>
    <property type="match status" value="1"/>
</dbReference>
<dbReference type="Pfam" id="PF00238">
    <property type="entry name" value="Ribosomal_L14"/>
    <property type="match status" value="1"/>
</dbReference>
<dbReference type="SMART" id="SM01374">
    <property type="entry name" value="Ribosomal_L14"/>
    <property type="match status" value="1"/>
</dbReference>
<dbReference type="SUPFAM" id="SSF50193">
    <property type="entry name" value="Ribosomal protein L14"/>
    <property type="match status" value="1"/>
</dbReference>
<dbReference type="PROSITE" id="PS00049">
    <property type="entry name" value="RIBOSOMAL_L14"/>
    <property type="match status" value="1"/>
</dbReference>
<name>RL14_VIBVY</name>